<proteinExistence type="evidence at protein level"/>
<reference evidence="6" key="1">
    <citation type="journal article" date="2011" name="Mol. Biol. Rep.">
        <title>Identification of methionine synthase (Sal k 3), as a novel allergen of Salsola kali pollen.</title>
        <authorList>
            <person name="Assarehzadegan M.A."/>
            <person name="Sankian M."/>
            <person name="Jabbari F."/>
            <person name="Tehrani M."/>
            <person name="Falak R."/>
            <person name="Varasteh A."/>
        </authorList>
    </citation>
    <scope>NUCLEOTIDE SEQUENCE [MRNA]</scope>
    <scope>TISSUE SPECIFICITY</scope>
    <scope>IDENTIFICATION BY MASS SPECTROMETRY</scope>
    <scope>ALLERGEN</scope>
    <scope>3D-STRUCTURE MODELING</scope>
    <source>
        <tissue evidence="4">Pollen</tissue>
    </source>
</reference>
<comment type="function">
    <text evidence="1">Catalyzes the transfer of a methyl group from 5-methyltetrahydrofolate to homocysteine resulting in methionine formation.</text>
</comment>
<comment type="catalytic activity">
    <reaction evidence="1">
        <text>5-methyltetrahydropteroyltri-L-glutamate + L-homocysteine = tetrahydropteroyltri-L-glutamate + L-methionine</text>
        <dbReference type="Rhea" id="RHEA:21196"/>
        <dbReference type="ChEBI" id="CHEBI:57844"/>
        <dbReference type="ChEBI" id="CHEBI:58140"/>
        <dbReference type="ChEBI" id="CHEBI:58199"/>
        <dbReference type="ChEBI" id="CHEBI:58207"/>
        <dbReference type="EC" id="2.1.1.14"/>
    </reaction>
</comment>
<comment type="cofactor">
    <cofactor evidence="1">
        <name>Zn(2+)</name>
        <dbReference type="ChEBI" id="CHEBI:29105"/>
    </cofactor>
    <text evidence="1">Binds 2 Zn(2+) ions per subunit.</text>
</comment>
<comment type="pathway">
    <text evidence="1">Amino-acid biosynthesis; L-methionine biosynthesis via de novo pathway; L-methionine from L-homocysteine (MetE route): step 1/1.</text>
</comment>
<comment type="tissue specificity">
    <text evidence="3">Expressed in pollen (at protein level).</text>
</comment>
<comment type="allergen">
    <text evidence="3">Causes an allergic reaction in human. Binds to IgE in patients allergic to the pollen of prickly saltwort. Both the recombinant 45 kDa N-terminal fragment and the 39 kDa C-terminal fragment of this protein bind to IgE in 67% of the 12 prickly saltwort pollen-allergic patients tested. The same patients have also a positive skin prick test (SPT) response toward these fragments.</text>
</comment>
<comment type="similarity">
    <text evidence="5">Belongs to the vitamin-B12 independent methionine synthase family.</text>
</comment>
<keyword id="KW-0020">Allergen</keyword>
<keyword id="KW-0028">Amino-acid biosynthesis</keyword>
<keyword id="KW-0479">Metal-binding</keyword>
<keyword id="KW-0486">Methionine biosynthesis</keyword>
<keyword id="KW-0489">Methyltransferase</keyword>
<keyword id="KW-0808">Transferase</keyword>
<keyword id="KW-0862">Zinc</keyword>
<organism evidence="6">
    <name type="scientific">Kali turgidum</name>
    <name type="common">Prickly saltwort</name>
    <name type="synonym">Salsola kali</name>
    <dbReference type="NCBI Taxonomy" id="151250"/>
    <lineage>
        <taxon>Eukaryota</taxon>
        <taxon>Viridiplantae</taxon>
        <taxon>Streptophyta</taxon>
        <taxon>Embryophyta</taxon>
        <taxon>Tracheophyta</taxon>
        <taxon>Spermatophyta</taxon>
        <taxon>Magnoliopsida</taxon>
        <taxon>eudicotyledons</taxon>
        <taxon>Gunneridae</taxon>
        <taxon>Pentapetalae</taxon>
        <taxon>Caryophyllales</taxon>
        <taxon>Chenopodiaceae</taxon>
        <taxon>Salsoloideae</taxon>
        <taxon>Salsoleae</taxon>
        <taxon>Kali</taxon>
    </lineage>
</organism>
<protein>
    <recommendedName>
        <fullName evidence="1">5-methyltetrahydropteroyltriglutamate--homocysteine methyltransferase</fullName>
        <ecNumber evidence="1">2.1.1.14</ecNumber>
    </recommendedName>
    <alternativeName>
        <fullName evidence="4">Cobalamin-independent methionine synthase</fullName>
    </alternativeName>
    <alternativeName>
        <fullName evidence="4">Pollen allergen Sal k 3</fullName>
    </alternativeName>
    <alternativeName>
        <fullName evidence="4">SkMetE</fullName>
    </alternativeName>
    <alternativeName>
        <fullName evidence="5">Vitamin-B12-independent methionine synthase</fullName>
    </alternativeName>
    <allergenName evidence="5">Sal k 3.0101</allergenName>
</protein>
<accession>C1KEU0</accession>
<name>METE_KALTU</name>
<evidence type="ECO:0000250" key="1">
    <source>
        <dbReference type="UniProtKB" id="O50008"/>
    </source>
</evidence>
<evidence type="ECO:0000250" key="2">
    <source>
        <dbReference type="UniProtKB" id="P82610"/>
    </source>
</evidence>
<evidence type="ECO:0000269" key="3">
    <source>
    </source>
</evidence>
<evidence type="ECO:0000303" key="4">
    <source>
    </source>
</evidence>
<evidence type="ECO:0000305" key="5"/>
<evidence type="ECO:0000312" key="6">
    <source>
        <dbReference type="EMBL" id="ACO34814.1"/>
    </source>
</evidence>
<sequence length="757" mass="83563">MASHVVGYPRMGPKRELKFALESFWDGKSSAEDLKKVAADLRSSIWKQMADAGIKYIPSNTFAYYDQVLDTTAMLGAVPARYGFNGGEIGFDLYFSMARGNASLPAMEMTKWFDTNYHYIVPELGPEVKFAYSSHKAVDEYKEAKALGVDTVPVLVGPVSYLLLSKAAKGVEKSFPLLSLLPKILPVYKEVIAELKAAGASTIQFDEPTLVMDLESHQLKAFTDAYADLESTLSGLNVLVETYFADLTPEAYKTLVSLNGVTAFGFDLVRGTKTLDLIKSGFPSGKYLFAGVVDGRNIWANDLAASLATLQSLESIVGKDKLVVSTSCSLLHTAVDLVNETKLDDEIKSWLAFAAQKVLEVNALAKALAGQKDEAFFSANAAALASRKSSPRVTNEAVQKAAAGLKGSDHRRATTVSARLDAQQKKLNLPVLPTTTIGSFPQTVELRRVRREYKAKKISEEEYVKAIKEEISKVVKLQEELDIDVLVHGEPERNDMVEYFGEQLSGFAFTVNGWVQSYGSRCVKPPIIYGDVSRPKAMTVFWSSLAQSMTSRPMKGMLTGPVTILNWSFVRNDQPRHETCYQIALAIEDEAEDLEKAGINVIQIDEAALREGLPLRKSGHGFYLQWAVHSFRITNVGIQDTTQIHTHMCYSNFNDIIHSIIDMDADVITIENSRSDEKLLSVFREGVKYGAGIGPGVYDIHSPRIPPTEELADRIRKMLAVLESNVLWVNPDCGLKTRKYNEVNPALSNMVYAAKPI</sequence>
<dbReference type="EC" id="2.1.1.14" evidence="1"/>
<dbReference type="EMBL" id="FJ821454">
    <property type="protein sequence ID" value="ACO34814.1"/>
    <property type="molecule type" value="mRNA"/>
</dbReference>
<dbReference type="SMR" id="C1KEU0"/>
<dbReference type="Allergome" id="8167">
    <property type="allergen name" value="Sal k 3"/>
</dbReference>
<dbReference type="Allergome" id="8177">
    <property type="allergen name" value="Sal k 3.0101"/>
</dbReference>
<dbReference type="UniPathway" id="UPA00051">
    <property type="reaction ID" value="UER00082"/>
</dbReference>
<dbReference type="GO" id="GO:0005829">
    <property type="term" value="C:cytosol"/>
    <property type="evidence" value="ECO:0000250"/>
    <property type="project" value="UniProtKB"/>
</dbReference>
<dbReference type="GO" id="GO:0003871">
    <property type="term" value="F:5-methyltetrahydropteroyltriglutamate-homocysteine S-methyltransferase activity"/>
    <property type="evidence" value="ECO:0007669"/>
    <property type="project" value="UniProtKB-EC"/>
</dbReference>
<dbReference type="GO" id="GO:0008705">
    <property type="term" value="F:methionine synthase activity"/>
    <property type="evidence" value="ECO:0000250"/>
    <property type="project" value="UniProtKB"/>
</dbReference>
<dbReference type="GO" id="GO:0008270">
    <property type="term" value="F:zinc ion binding"/>
    <property type="evidence" value="ECO:0000250"/>
    <property type="project" value="UniProtKB"/>
</dbReference>
<dbReference type="GO" id="GO:0009086">
    <property type="term" value="P:methionine biosynthetic process"/>
    <property type="evidence" value="ECO:0000250"/>
    <property type="project" value="UniProtKB"/>
</dbReference>
<dbReference type="GO" id="GO:0032259">
    <property type="term" value="P:methylation"/>
    <property type="evidence" value="ECO:0007669"/>
    <property type="project" value="UniProtKB-KW"/>
</dbReference>
<dbReference type="CDD" id="cd03311">
    <property type="entry name" value="CIMS_C_terminal_like"/>
    <property type="match status" value="1"/>
</dbReference>
<dbReference type="CDD" id="cd03312">
    <property type="entry name" value="CIMS_N_terminal_like"/>
    <property type="match status" value="1"/>
</dbReference>
<dbReference type="FunFam" id="3.20.20.210:FF:000002">
    <property type="entry name" value="5-methyltetrahydropteroyltriglutamate--homocysteine methyltransferase"/>
    <property type="match status" value="1"/>
</dbReference>
<dbReference type="FunFam" id="3.20.20.210:FF:000003">
    <property type="entry name" value="5-methyltetrahydropteroyltriglutamate--homocysteine methyltransferase"/>
    <property type="match status" value="1"/>
</dbReference>
<dbReference type="Gene3D" id="3.20.20.210">
    <property type="match status" value="2"/>
</dbReference>
<dbReference type="HAMAP" id="MF_00172">
    <property type="entry name" value="Meth_synth"/>
    <property type="match status" value="1"/>
</dbReference>
<dbReference type="InterPro" id="IPR013215">
    <property type="entry name" value="Cbl-indep_Met_Synth_N"/>
</dbReference>
<dbReference type="InterPro" id="IPR006276">
    <property type="entry name" value="Cobalamin-indep_Met_synthase"/>
</dbReference>
<dbReference type="InterPro" id="IPR002629">
    <property type="entry name" value="Met_Synth_C/arc"/>
</dbReference>
<dbReference type="InterPro" id="IPR038071">
    <property type="entry name" value="UROD/MetE-like_sf"/>
</dbReference>
<dbReference type="NCBIfam" id="TIGR01371">
    <property type="entry name" value="met_syn_B12ind"/>
    <property type="match status" value="1"/>
</dbReference>
<dbReference type="NCBIfam" id="NF003556">
    <property type="entry name" value="PRK05222.1"/>
    <property type="match status" value="1"/>
</dbReference>
<dbReference type="PANTHER" id="PTHR30519">
    <property type="entry name" value="5-METHYLTETRAHYDROPTEROYLTRIGLUTAMATE--HOMOCYSTEINE METHYLTRANSFERASE"/>
    <property type="match status" value="1"/>
</dbReference>
<dbReference type="Pfam" id="PF08267">
    <property type="entry name" value="Meth_synt_1"/>
    <property type="match status" value="1"/>
</dbReference>
<dbReference type="Pfam" id="PF01717">
    <property type="entry name" value="Meth_synt_2"/>
    <property type="match status" value="1"/>
</dbReference>
<dbReference type="PIRSF" id="PIRSF000382">
    <property type="entry name" value="MeTrfase_B12_ind"/>
    <property type="match status" value="1"/>
</dbReference>
<dbReference type="SUPFAM" id="SSF51726">
    <property type="entry name" value="UROD/MetE-like"/>
    <property type="match status" value="2"/>
</dbReference>
<feature type="chain" id="PRO_0000455335" description="5-methyltetrahydropteroyltriglutamate--homocysteine methyltransferase">
    <location>
        <begin position="1"/>
        <end position="757" status="greater than"/>
    </location>
</feature>
<feature type="active site" description="Proton donor" evidence="2">
    <location>
        <position position="701"/>
    </location>
</feature>
<feature type="binding site" evidence="1">
    <location>
        <position position="18"/>
    </location>
    <ligand>
        <name>5-methyltetrahydropteroyltri-L-glutamate</name>
        <dbReference type="ChEBI" id="CHEBI:58207"/>
    </ligand>
</feature>
<feature type="binding site" evidence="1">
    <location>
        <position position="116"/>
    </location>
    <ligand>
        <name>5-methyltetrahydropteroyltri-L-glutamate</name>
        <dbReference type="ChEBI" id="CHEBI:58207"/>
    </ligand>
</feature>
<feature type="binding site" evidence="1">
    <location>
        <begin position="437"/>
        <end position="439"/>
    </location>
    <ligand>
        <name>L-homocysteine</name>
        <dbReference type="ChEBI" id="CHEBI:58199"/>
    </ligand>
</feature>
<feature type="binding site" evidence="1">
    <location>
        <begin position="437"/>
        <end position="439"/>
    </location>
    <ligand>
        <name>L-methionine</name>
        <dbReference type="ChEBI" id="CHEBI:57844"/>
    </ligand>
</feature>
<feature type="binding site" evidence="1">
    <location>
        <position position="490"/>
    </location>
    <ligand>
        <name>L-methionine</name>
        <dbReference type="ChEBI" id="CHEBI:57844"/>
    </ligand>
</feature>
<feature type="binding site" evidence="1">
    <location>
        <begin position="521"/>
        <end position="522"/>
    </location>
    <ligand>
        <name>5-methyltetrahydropteroyltri-L-glutamate</name>
        <dbReference type="ChEBI" id="CHEBI:58207"/>
    </ligand>
</feature>
<feature type="binding site" evidence="1">
    <location>
        <position position="567"/>
    </location>
    <ligand>
        <name>5-methyltetrahydropteroyltri-L-glutamate</name>
        <dbReference type="ChEBI" id="CHEBI:58207"/>
    </ligand>
</feature>
<feature type="binding site" evidence="1">
    <location>
        <position position="605"/>
    </location>
    <ligand>
        <name>L-homocysteine</name>
        <dbReference type="ChEBI" id="CHEBI:58199"/>
    </ligand>
</feature>
<feature type="binding site" evidence="1">
    <location>
        <position position="605"/>
    </location>
    <ligand>
        <name>L-methionine</name>
        <dbReference type="ChEBI" id="CHEBI:57844"/>
    </ligand>
</feature>
<feature type="binding site" evidence="1">
    <location>
        <position position="647"/>
    </location>
    <ligand>
        <name>Zn(2+)</name>
        <dbReference type="ChEBI" id="CHEBI:29105"/>
        <label>1</label>
        <note>catalytic</note>
    </ligand>
</feature>
<feature type="binding site" evidence="1">
    <location>
        <position position="649"/>
    </location>
    <ligand>
        <name>Zn(2+)</name>
        <dbReference type="ChEBI" id="CHEBI:29105"/>
        <label>1</label>
        <note>catalytic</note>
    </ligand>
</feature>
<feature type="binding site" evidence="1">
    <location>
        <position position="658"/>
    </location>
    <ligand>
        <name>Zn(2+)</name>
        <dbReference type="ChEBI" id="CHEBI:29105"/>
        <label>2</label>
    </ligand>
</feature>
<feature type="binding site" evidence="1">
    <location>
        <position position="662"/>
    </location>
    <ligand>
        <name>Zn(2+)</name>
        <dbReference type="ChEBI" id="CHEBI:29105"/>
        <label>2</label>
    </ligand>
</feature>
<feature type="binding site" evidence="2">
    <location>
        <position position="671"/>
    </location>
    <ligand>
        <name>Zn(2+)</name>
        <dbReference type="ChEBI" id="CHEBI:29105"/>
        <label>1</label>
        <note>catalytic</note>
    </ligand>
</feature>
<feature type="binding site" evidence="1">
    <location>
        <position position="733"/>
    </location>
    <ligand>
        <name>Zn(2+)</name>
        <dbReference type="ChEBI" id="CHEBI:29105"/>
        <label>1</label>
        <note>catalytic</note>
    </ligand>
</feature>
<feature type="non-terminal residue" evidence="6">
    <location>
        <position position="757"/>
    </location>
</feature>